<feature type="chain" id="PRO_0000329519" description="Polyribonucleotide nucleotidyltransferase">
    <location>
        <begin position="1"/>
        <end position="705"/>
    </location>
</feature>
<feature type="domain" description="KH" evidence="1">
    <location>
        <begin position="554"/>
        <end position="613"/>
    </location>
</feature>
<feature type="domain" description="S1 motif" evidence="1">
    <location>
        <begin position="623"/>
        <end position="691"/>
    </location>
</feature>
<feature type="binding site" evidence="1">
    <location>
        <position position="487"/>
    </location>
    <ligand>
        <name>Mg(2+)</name>
        <dbReference type="ChEBI" id="CHEBI:18420"/>
    </ligand>
</feature>
<feature type="binding site" evidence="1">
    <location>
        <position position="493"/>
    </location>
    <ligand>
        <name>Mg(2+)</name>
        <dbReference type="ChEBI" id="CHEBI:18420"/>
    </ligand>
</feature>
<proteinExistence type="inferred from homology"/>
<reference key="1">
    <citation type="journal article" date="2007" name="PLoS ONE">
        <title>Paradoxical DNA repair and peroxide resistance gene conservation in Bacillus pumilus SAFR-032.</title>
        <authorList>
            <person name="Gioia J."/>
            <person name="Yerrapragada S."/>
            <person name="Qin X."/>
            <person name="Jiang H."/>
            <person name="Igboeli O.C."/>
            <person name="Muzny D."/>
            <person name="Dugan-Rocha S."/>
            <person name="Ding Y."/>
            <person name="Hawes A."/>
            <person name="Liu W."/>
            <person name="Perez L."/>
            <person name="Kovar C."/>
            <person name="Dinh H."/>
            <person name="Lee S."/>
            <person name="Nazareth L."/>
            <person name="Blyth P."/>
            <person name="Holder M."/>
            <person name="Buhay C."/>
            <person name="Tirumalai M.R."/>
            <person name="Liu Y."/>
            <person name="Dasgupta I."/>
            <person name="Bokhetache L."/>
            <person name="Fujita M."/>
            <person name="Karouia F."/>
            <person name="Eswara Moorthy P."/>
            <person name="Siefert J."/>
            <person name="Uzman A."/>
            <person name="Buzumbo P."/>
            <person name="Verma A."/>
            <person name="Zwiya H."/>
            <person name="McWilliams B.D."/>
            <person name="Olowu A."/>
            <person name="Clinkenbeard K.D."/>
            <person name="Newcombe D."/>
            <person name="Golebiewski L."/>
            <person name="Petrosino J.F."/>
            <person name="Nicholson W.L."/>
            <person name="Fox G.E."/>
            <person name="Venkateswaran K."/>
            <person name="Highlander S.K."/>
            <person name="Weinstock G.M."/>
        </authorList>
    </citation>
    <scope>NUCLEOTIDE SEQUENCE [LARGE SCALE GENOMIC DNA]</scope>
    <source>
        <strain>SAFR-032</strain>
    </source>
</reference>
<organism>
    <name type="scientific">Bacillus pumilus (strain SAFR-032)</name>
    <dbReference type="NCBI Taxonomy" id="315750"/>
    <lineage>
        <taxon>Bacteria</taxon>
        <taxon>Bacillati</taxon>
        <taxon>Bacillota</taxon>
        <taxon>Bacilli</taxon>
        <taxon>Bacillales</taxon>
        <taxon>Bacillaceae</taxon>
        <taxon>Bacillus</taxon>
    </lineage>
</organism>
<accession>A8FDD7</accession>
<sequence length="705" mass="77294">MGQEKHVFTIDWAGRQLTVETGQLAKQANGAVLVRYGDTAVLSSATASKEPKPLDFFPLTVNYEERLYAVGKIPGGFIKREGRPSEKAILASRLIDRPIRPLFADGFRNEVQVISIVMSVDQDCSSEMAAMFGSSLALCVSDIPFEGPIAGVTVGRVDGKFIINPNVEQLEQSDINLVVAGTKDAINMVEAGADEVPEETMLEAIMYGHQEIKRLIEFQEEIVKAVGKAKIDIPLYEVDQTLADEVKALAETDLLKAIQVHEKHAREDAISAVKKAVVEKFEEEDRDEATIKQAKDVLNKLVKNEVRRLITEEKVRPDGRGVDQIRPLSSEVGLLPRTHGSGLFTRGQTQALSICTLGALGDVQILDGLGVEESKRFMHHYNFPQFSVGETGPMRGPGRREIGHGALGERALEPVIPSEKDFPYTVRLVSEVLESNGSTSQASICASTLAMMDAGVPIKAPVAGIAMGLVKSGEYYTVLTDIQGMEDALGDMDFKVAGTSKGVTALQMDIKIDGLSKDILEEALQQAKKGRMEILDSMLSTIPTSRGELSRYAPKILTMKINPDKIRDVIGPSGKQINKIIEDTGVKIDIEQDGTIFISSTEEDMNQKAKKIIEDLVREVEVGQLYLGKVKRIEKFGAFLEIFSGKDGLVHISELALDRVGKVEDVVKIGDELLVKVTEIDKQGRVNLSRKAVLREEKEKEEKQS</sequence>
<gene>
    <name evidence="1" type="primary">pnp</name>
    <name type="ordered locus">BPUM_1572</name>
</gene>
<dbReference type="EC" id="2.7.7.8" evidence="1"/>
<dbReference type="EMBL" id="CP000813">
    <property type="protein sequence ID" value="ABV62254.1"/>
    <property type="molecule type" value="Genomic_DNA"/>
</dbReference>
<dbReference type="RefSeq" id="WP_012009998.1">
    <property type="nucleotide sequence ID" value="NZ_VEIS01000003.1"/>
</dbReference>
<dbReference type="SMR" id="A8FDD7"/>
<dbReference type="STRING" id="315750.BPUM_1572"/>
<dbReference type="GeneID" id="5620835"/>
<dbReference type="KEGG" id="bpu:BPUM_1572"/>
<dbReference type="eggNOG" id="COG1185">
    <property type="taxonomic scope" value="Bacteria"/>
</dbReference>
<dbReference type="HOGENOM" id="CLU_004217_2_2_9"/>
<dbReference type="OrthoDB" id="9804305at2"/>
<dbReference type="Proteomes" id="UP000001355">
    <property type="component" value="Chromosome"/>
</dbReference>
<dbReference type="GO" id="GO:0005829">
    <property type="term" value="C:cytosol"/>
    <property type="evidence" value="ECO:0007669"/>
    <property type="project" value="TreeGrafter"/>
</dbReference>
<dbReference type="GO" id="GO:0000175">
    <property type="term" value="F:3'-5'-RNA exonuclease activity"/>
    <property type="evidence" value="ECO:0007669"/>
    <property type="project" value="TreeGrafter"/>
</dbReference>
<dbReference type="GO" id="GO:0000287">
    <property type="term" value="F:magnesium ion binding"/>
    <property type="evidence" value="ECO:0007669"/>
    <property type="project" value="UniProtKB-UniRule"/>
</dbReference>
<dbReference type="GO" id="GO:0004654">
    <property type="term" value="F:polyribonucleotide nucleotidyltransferase activity"/>
    <property type="evidence" value="ECO:0007669"/>
    <property type="project" value="UniProtKB-UniRule"/>
</dbReference>
<dbReference type="GO" id="GO:0003723">
    <property type="term" value="F:RNA binding"/>
    <property type="evidence" value="ECO:0007669"/>
    <property type="project" value="UniProtKB-UniRule"/>
</dbReference>
<dbReference type="GO" id="GO:0006402">
    <property type="term" value="P:mRNA catabolic process"/>
    <property type="evidence" value="ECO:0007669"/>
    <property type="project" value="UniProtKB-UniRule"/>
</dbReference>
<dbReference type="GO" id="GO:0006396">
    <property type="term" value="P:RNA processing"/>
    <property type="evidence" value="ECO:0007669"/>
    <property type="project" value="InterPro"/>
</dbReference>
<dbReference type="CDD" id="cd02393">
    <property type="entry name" value="KH-I_PNPase"/>
    <property type="match status" value="1"/>
</dbReference>
<dbReference type="CDD" id="cd11363">
    <property type="entry name" value="RNase_PH_PNPase_1"/>
    <property type="match status" value="1"/>
</dbReference>
<dbReference type="CDD" id="cd11364">
    <property type="entry name" value="RNase_PH_PNPase_2"/>
    <property type="match status" value="1"/>
</dbReference>
<dbReference type="CDD" id="cd04472">
    <property type="entry name" value="S1_PNPase"/>
    <property type="match status" value="1"/>
</dbReference>
<dbReference type="FunFam" id="2.40.50.140:FF:000023">
    <property type="entry name" value="Polyribonucleotide nucleotidyltransferase"/>
    <property type="match status" value="1"/>
</dbReference>
<dbReference type="FunFam" id="3.30.1370.10:FF:000001">
    <property type="entry name" value="Polyribonucleotide nucleotidyltransferase"/>
    <property type="match status" value="1"/>
</dbReference>
<dbReference type="FunFam" id="3.30.230.70:FF:000001">
    <property type="entry name" value="Polyribonucleotide nucleotidyltransferase"/>
    <property type="match status" value="1"/>
</dbReference>
<dbReference type="FunFam" id="3.30.230.70:FF:000002">
    <property type="entry name" value="Polyribonucleotide nucleotidyltransferase"/>
    <property type="match status" value="1"/>
</dbReference>
<dbReference type="Gene3D" id="3.30.230.70">
    <property type="entry name" value="GHMP Kinase, N-terminal domain"/>
    <property type="match status" value="2"/>
</dbReference>
<dbReference type="Gene3D" id="3.30.1370.10">
    <property type="entry name" value="K Homology domain, type 1"/>
    <property type="match status" value="1"/>
</dbReference>
<dbReference type="Gene3D" id="2.40.50.140">
    <property type="entry name" value="Nucleic acid-binding proteins"/>
    <property type="match status" value="1"/>
</dbReference>
<dbReference type="HAMAP" id="MF_01595">
    <property type="entry name" value="PNPase"/>
    <property type="match status" value="1"/>
</dbReference>
<dbReference type="InterPro" id="IPR001247">
    <property type="entry name" value="ExoRNase_PH_dom1"/>
</dbReference>
<dbReference type="InterPro" id="IPR015847">
    <property type="entry name" value="ExoRNase_PH_dom2"/>
</dbReference>
<dbReference type="InterPro" id="IPR036345">
    <property type="entry name" value="ExoRNase_PH_dom2_sf"/>
</dbReference>
<dbReference type="InterPro" id="IPR004087">
    <property type="entry name" value="KH_dom"/>
</dbReference>
<dbReference type="InterPro" id="IPR004088">
    <property type="entry name" value="KH_dom_type_1"/>
</dbReference>
<dbReference type="InterPro" id="IPR036612">
    <property type="entry name" value="KH_dom_type_1_sf"/>
</dbReference>
<dbReference type="InterPro" id="IPR012340">
    <property type="entry name" value="NA-bd_OB-fold"/>
</dbReference>
<dbReference type="InterPro" id="IPR012162">
    <property type="entry name" value="PNPase"/>
</dbReference>
<dbReference type="InterPro" id="IPR027408">
    <property type="entry name" value="PNPase/RNase_PH_dom_sf"/>
</dbReference>
<dbReference type="InterPro" id="IPR015848">
    <property type="entry name" value="PNPase_PH_RNA-bd_bac/org-type"/>
</dbReference>
<dbReference type="InterPro" id="IPR020568">
    <property type="entry name" value="Ribosomal_Su5_D2-typ_SF"/>
</dbReference>
<dbReference type="InterPro" id="IPR003029">
    <property type="entry name" value="S1_domain"/>
</dbReference>
<dbReference type="NCBIfam" id="TIGR03591">
    <property type="entry name" value="polynuc_phos"/>
    <property type="match status" value="1"/>
</dbReference>
<dbReference type="NCBIfam" id="NF008805">
    <property type="entry name" value="PRK11824.1"/>
    <property type="match status" value="1"/>
</dbReference>
<dbReference type="PANTHER" id="PTHR11252">
    <property type="entry name" value="POLYRIBONUCLEOTIDE NUCLEOTIDYLTRANSFERASE"/>
    <property type="match status" value="1"/>
</dbReference>
<dbReference type="PANTHER" id="PTHR11252:SF0">
    <property type="entry name" value="POLYRIBONUCLEOTIDE NUCLEOTIDYLTRANSFERASE 1, MITOCHONDRIAL"/>
    <property type="match status" value="1"/>
</dbReference>
<dbReference type="Pfam" id="PF00013">
    <property type="entry name" value="KH_1"/>
    <property type="match status" value="1"/>
</dbReference>
<dbReference type="Pfam" id="PF03726">
    <property type="entry name" value="PNPase"/>
    <property type="match status" value="1"/>
</dbReference>
<dbReference type="Pfam" id="PF01138">
    <property type="entry name" value="RNase_PH"/>
    <property type="match status" value="2"/>
</dbReference>
<dbReference type="Pfam" id="PF03725">
    <property type="entry name" value="RNase_PH_C"/>
    <property type="match status" value="2"/>
</dbReference>
<dbReference type="Pfam" id="PF00575">
    <property type="entry name" value="S1"/>
    <property type="match status" value="1"/>
</dbReference>
<dbReference type="PIRSF" id="PIRSF005499">
    <property type="entry name" value="PNPase"/>
    <property type="match status" value="1"/>
</dbReference>
<dbReference type="SMART" id="SM00322">
    <property type="entry name" value="KH"/>
    <property type="match status" value="1"/>
</dbReference>
<dbReference type="SMART" id="SM00316">
    <property type="entry name" value="S1"/>
    <property type="match status" value="1"/>
</dbReference>
<dbReference type="SUPFAM" id="SSF54791">
    <property type="entry name" value="Eukaryotic type KH-domain (KH-domain type I)"/>
    <property type="match status" value="1"/>
</dbReference>
<dbReference type="SUPFAM" id="SSF50249">
    <property type="entry name" value="Nucleic acid-binding proteins"/>
    <property type="match status" value="1"/>
</dbReference>
<dbReference type="SUPFAM" id="SSF55666">
    <property type="entry name" value="Ribonuclease PH domain 2-like"/>
    <property type="match status" value="2"/>
</dbReference>
<dbReference type="SUPFAM" id="SSF54211">
    <property type="entry name" value="Ribosomal protein S5 domain 2-like"/>
    <property type="match status" value="2"/>
</dbReference>
<dbReference type="PROSITE" id="PS50084">
    <property type="entry name" value="KH_TYPE_1"/>
    <property type="match status" value="1"/>
</dbReference>
<dbReference type="PROSITE" id="PS50126">
    <property type="entry name" value="S1"/>
    <property type="match status" value="1"/>
</dbReference>
<protein>
    <recommendedName>
        <fullName evidence="1">Polyribonucleotide nucleotidyltransferase</fullName>
        <ecNumber evidence="1">2.7.7.8</ecNumber>
    </recommendedName>
    <alternativeName>
        <fullName evidence="1">Polynucleotide phosphorylase</fullName>
        <shortName evidence="1">PNPase</shortName>
    </alternativeName>
</protein>
<name>PNP_BACP2</name>
<comment type="function">
    <text evidence="1">Involved in mRNA degradation. Catalyzes the phosphorolysis of single-stranded polyribonucleotides processively in the 3'- to 5'-direction.</text>
</comment>
<comment type="catalytic activity">
    <reaction evidence="1">
        <text>RNA(n+1) + phosphate = RNA(n) + a ribonucleoside 5'-diphosphate</text>
        <dbReference type="Rhea" id="RHEA:22096"/>
        <dbReference type="Rhea" id="RHEA-COMP:14527"/>
        <dbReference type="Rhea" id="RHEA-COMP:17342"/>
        <dbReference type="ChEBI" id="CHEBI:43474"/>
        <dbReference type="ChEBI" id="CHEBI:57930"/>
        <dbReference type="ChEBI" id="CHEBI:140395"/>
        <dbReference type="EC" id="2.7.7.8"/>
    </reaction>
</comment>
<comment type="cofactor">
    <cofactor evidence="1">
        <name>Mg(2+)</name>
        <dbReference type="ChEBI" id="CHEBI:18420"/>
    </cofactor>
</comment>
<comment type="subcellular location">
    <subcellularLocation>
        <location evidence="1">Cytoplasm</location>
    </subcellularLocation>
</comment>
<comment type="similarity">
    <text evidence="1">Belongs to the polyribonucleotide nucleotidyltransferase family.</text>
</comment>
<evidence type="ECO:0000255" key="1">
    <source>
        <dbReference type="HAMAP-Rule" id="MF_01595"/>
    </source>
</evidence>
<keyword id="KW-0963">Cytoplasm</keyword>
<keyword id="KW-0460">Magnesium</keyword>
<keyword id="KW-0479">Metal-binding</keyword>
<keyword id="KW-0548">Nucleotidyltransferase</keyword>
<keyword id="KW-0694">RNA-binding</keyword>
<keyword id="KW-0808">Transferase</keyword>